<sequence length="550" mass="57787">MAAKDVKFGNDARVKMLRGVNVLADAVKVTLGPKGRNVVLDKSFGAPAITKDGVTVAREIELEDKFENMGAQMVKEVASKANDAAGDGTTTATVLAQSIVTEGLKAVAAGMNPMDLKRGVDKAVIAAVEELKCLSVPCSDFKAIAQVGTISANSDETVGKLIAEAMEKVGKEGVITVEEGTGLQDELDVVEGMQFDRGYLSPYFINKPDTGSIELDNPFILLADKKISNNREMLPPLESVAKAGNLLIIAEDVEGEALATLVVNTMRGIVKVAAVKAPGFGDRRKAMLQDIATLTGSTVISEEIGLELEKTTIEDLGHAKRVVINKDTTTIIDGIGNESAIKGRVVQIRQQIEEATSDYDREKLQERVAKLAGGVAVIKVGAATEVEMKEKKARVEDALHATRAAVEEGVVAGGGVALIRVAGKISSLTGENEDQNVGIKVAIRAMESPLRQIVINAGEEASVIANNVKAGKGNYGYNAYSEQYGDMIKMGILDPTKVTRSALQYAASVAGLMITTECMITDLPKSDSSDLSNAGNGGMGGGMGGMGGMM</sequence>
<comment type="function">
    <text evidence="1">Together with its co-chaperonin GroES, plays an essential role in assisting protein folding. The GroEL-GroES system forms a nano-cage that allows encapsulation of the non-native substrate proteins and provides a physical environment optimized to promote and accelerate protein folding.</text>
</comment>
<comment type="catalytic activity">
    <reaction evidence="1">
        <text>ATP + H2O + a folded polypeptide = ADP + phosphate + an unfolded polypeptide.</text>
        <dbReference type="EC" id="5.6.1.7"/>
    </reaction>
</comment>
<comment type="subunit">
    <text evidence="1">Forms a cylinder of 14 subunits composed of two heptameric rings stacked back-to-back. Interacts with the co-chaperonin GroES.</text>
</comment>
<comment type="subcellular location">
    <subcellularLocation>
        <location evidence="1">Cytoplasm</location>
    </subcellularLocation>
</comment>
<comment type="similarity">
    <text evidence="1">Belongs to the chaperonin (HSP60) family.</text>
</comment>
<evidence type="ECO:0000255" key="1">
    <source>
        <dbReference type="HAMAP-Rule" id="MF_00600"/>
    </source>
</evidence>
<protein>
    <recommendedName>
        <fullName evidence="1">Chaperonin GroEL</fullName>
        <ecNumber evidence="1">5.6.1.7</ecNumber>
    </recommendedName>
    <alternativeName>
        <fullName evidence="1">60 kDa chaperonin</fullName>
    </alternativeName>
    <alternativeName>
        <fullName evidence="1">Chaperonin-60</fullName>
        <shortName evidence="1">Cpn60</shortName>
    </alternativeName>
</protein>
<dbReference type="EC" id="5.6.1.7" evidence="1"/>
<dbReference type="EMBL" id="AJ439085">
    <property type="protein sequence ID" value="CAD27797.1"/>
    <property type="molecule type" value="Genomic_DNA"/>
</dbReference>
<dbReference type="SMR" id="Q8KIX2"/>
<dbReference type="GO" id="GO:0005737">
    <property type="term" value="C:cytoplasm"/>
    <property type="evidence" value="ECO:0007669"/>
    <property type="project" value="UniProtKB-SubCell"/>
</dbReference>
<dbReference type="GO" id="GO:0005524">
    <property type="term" value="F:ATP binding"/>
    <property type="evidence" value="ECO:0007669"/>
    <property type="project" value="UniProtKB-UniRule"/>
</dbReference>
<dbReference type="GO" id="GO:0140662">
    <property type="term" value="F:ATP-dependent protein folding chaperone"/>
    <property type="evidence" value="ECO:0007669"/>
    <property type="project" value="InterPro"/>
</dbReference>
<dbReference type="GO" id="GO:0016853">
    <property type="term" value="F:isomerase activity"/>
    <property type="evidence" value="ECO:0007669"/>
    <property type="project" value="UniProtKB-KW"/>
</dbReference>
<dbReference type="GO" id="GO:0051082">
    <property type="term" value="F:unfolded protein binding"/>
    <property type="evidence" value="ECO:0007669"/>
    <property type="project" value="UniProtKB-UniRule"/>
</dbReference>
<dbReference type="GO" id="GO:0042026">
    <property type="term" value="P:protein refolding"/>
    <property type="evidence" value="ECO:0007669"/>
    <property type="project" value="UniProtKB-UniRule"/>
</dbReference>
<dbReference type="CDD" id="cd03344">
    <property type="entry name" value="GroEL"/>
    <property type="match status" value="1"/>
</dbReference>
<dbReference type="FunFam" id="1.10.560.10:FF:000001">
    <property type="entry name" value="60 kDa chaperonin"/>
    <property type="match status" value="1"/>
</dbReference>
<dbReference type="FunFam" id="3.50.7.10:FF:000001">
    <property type="entry name" value="60 kDa chaperonin"/>
    <property type="match status" value="1"/>
</dbReference>
<dbReference type="Gene3D" id="3.50.7.10">
    <property type="entry name" value="GroEL"/>
    <property type="match status" value="1"/>
</dbReference>
<dbReference type="Gene3D" id="1.10.560.10">
    <property type="entry name" value="GroEL-like equatorial domain"/>
    <property type="match status" value="1"/>
</dbReference>
<dbReference type="Gene3D" id="3.30.260.10">
    <property type="entry name" value="TCP-1-like chaperonin intermediate domain"/>
    <property type="match status" value="1"/>
</dbReference>
<dbReference type="HAMAP" id="MF_00600">
    <property type="entry name" value="CH60"/>
    <property type="match status" value="1"/>
</dbReference>
<dbReference type="InterPro" id="IPR018370">
    <property type="entry name" value="Chaperonin_Cpn60_CS"/>
</dbReference>
<dbReference type="InterPro" id="IPR001844">
    <property type="entry name" value="Cpn60/GroEL"/>
</dbReference>
<dbReference type="InterPro" id="IPR002423">
    <property type="entry name" value="Cpn60/GroEL/TCP-1"/>
</dbReference>
<dbReference type="InterPro" id="IPR027409">
    <property type="entry name" value="GroEL-like_apical_dom_sf"/>
</dbReference>
<dbReference type="InterPro" id="IPR027413">
    <property type="entry name" value="GROEL-like_equatorial_sf"/>
</dbReference>
<dbReference type="InterPro" id="IPR027410">
    <property type="entry name" value="TCP-1-like_intermed_sf"/>
</dbReference>
<dbReference type="NCBIfam" id="TIGR02348">
    <property type="entry name" value="GroEL"/>
    <property type="match status" value="1"/>
</dbReference>
<dbReference type="NCBIfam" id="NF000592">
    <property type="entry name" value="PRK00013.1"/>
    <property type="match status" value="1"/>
</dbReference>
<dbReference type="NCBIfam" id="NF009487">
    <property type="entry name" value="PRK12849.1"/>
    <property type="match status" value="1"/>
</dbReference>
<dbReference type="NCBIfam" id="NF009488">
    <property type="entry name" value="PRK12850.1"/>
    <property type="match status" value="1"/>
</dbReference>
<dbReference type="NCBIfam" id="NF009489">
    <property type="entry name" value="PRK12851.1"/>
    <property type="match status" value="1"/>
</dbReference>
<dbReference type="PANTHER" id="PTHR45633">
    <property type="entry name" value="60 KDA HEAT SHOCK PROTEIN, MITOCHONDRIAL"/>
    <property type="match status" value="1"/>
</dbReference>
<dbReference type="Pfam" id="PF00118">
    <property type="entry name" value="Cpn60_TCP1"/>
    <property type="match status" value="1"/>
</dbReference>
<dbReference type="PRINTS" id="PR00298">
    <property type="entry name" value="CHAPERONIN60"/>
</dbReference>
<dbReference type="SUPFAM" id="SSF52029">
    <property type="entry name" value="GroEL apical domain-like"/>
    <property type="match status" value="1"/>
</dbReference>
<dbReference type="SUPFAM" id="SSF48592">
    <property type="entry name" value="GroEL equatorial domain-like"/>
    <property type="match status" value="1"/>
</dbReference>
<dbReference type="SUPFAM" id="SSF54849">
    <property type="entry name" value="GroEL-intermediate domain like"/>
    <property type="match status" value="1"/>
</dbReference>
<dbReference type="PROSITE" id="PS00296">
    <property type="entry name" value="CHAPERONINS_CPN60"/>
    <property type="match status" value="1"/>
</dbReference>
<accession>Q8KIX2</accession>
<feature type="chain" id="PRO_0000063314" description="Chaperonin GroEL">
    <location>
        <begin position="1"/>
        <end position="550"/>
    </location>
</feature>
<feature type="binding site" evidence="1">
    <location>
        <begin position="30"/>
        <end position="33"/>
    </location>
    <ligand>
        <name>ATP</name>
        <dbReference type="ChEBI" id="CHEBI:30616"/>
    </ligand>
</feature>
<feature type="binding site" evidence="1">
    <location>
        <position position="51"/>
    </location>
    <ligand>
        <name>ATP</name>
        <dbReference type="ChEBI" id="CHEBI:30616"/>
    </ligand>
</feature>
<feature type="binding site" evidence="1">
    <location>
        <begin position="87"/>
        <end position="91"/>
    </location>
    <ligand>
        <name>ATP</name>
        <dbReference type="ChEBI" id="CHEBI:30616"/>
    </ligand>
</feature>
<feature type="binding site" evidence="1">
    <location>
        <position position="414"/>
    </location>
    <ligand>
        <name>ATP</name>
        <dbReference type="ChEBI" id="CHEBI:30616"/>
    </ligand>
</feature>
<feature type="binding site" evidence="1">
    <location>
        <position position="494"/>
    </location>
    <ligand>
        <name>ATP</name>
        <dbReference type="ChEBI" id="CHEBI:30616"/>
    </ligand>
</feature>
<reference key="1">
    <citation type="journal article" date="2002" name="Mol. Biol. Evol.">
        <title>The evolution of the heat-shock protein GroEL from Buchnera, the primary endosymbiont of aphids, is governed by positive selection.</title>
        <authorList>
            <person name="Fares M.A."/>
            <person name="Barrio E."/>
            <person name="Sabater-Munoz B."/>
            <person name="Moya A."/>
        </authorList>
    </citation>
    <scope>NUCLEOTIDE SEQUENCE [GENOMIC DNA]</scope>
</reference>
<gene>
    <name evidence="1" type="primary">groEL</name>
    <name evidence="1" type="synonym">groL</name>
</gene>
<keyword id="KW-0067">ATP-binding</keyword>
<keyword id="KW-0143">Chaperone</keyword>
<keyword id="KW-0963">Cytoplasm</keyword>
<keyword id="KW-0413">Isomerase</keyword>
<keyword id="KW-0547">Nucleotide-binding</keyword>
<name>CH60_BUCTS</name>
<organism>
    <name type="scientific">Buchnera aphidicola subsp. Thelaxes suberi</name>
    <dbReference type="NCBI Taxonomy" id="98797"/>
    <lineage>
        <taxon>Bacteria</taxon>
        <taxon>Pseudomonadati</taxon>
        <taxon>Pseudomonadota</taxon>
        <taxon>Gammaproteobacteria</taxon>
        <taxon>Enterobacterales</taxon>
        <taxon>Erwiniaceae</taxon>
        <taxon>Buchnera</taxon>
    </lineage>
</organism>
<proteinExistence type="inferred from homology"/>